<sequence>MNTKLTVLCFLGIVTIVSCGWMSEKKVQGILDKKLPEGIIRNAAKAIVHKMAKNQFGCFANVDVKGDCKRHCKAEDKEGICHGTKCKCGVPISYL</sequence>
<evidence type="ECO:0000255" key="1">
    <source>
        <dbReference type="PROSITE-ProRule" id="PRU01209"/>
    </source>
</evidence>
<evidence type="ECO:0000269" key="2">
    <source>
    </source>
</evidence>
<evidence type="ECO:0000269" key="3">
    <source>
    </source>
</evidence>
<evidence type="ECO:0000269" key="4">
    <source>
    </source>
</evidence>
<evidence type="ECO:0000303" key="5">
    <source>
    </source>
</evidence>
<evidence type="ECO:0000303" key="6">
    <source>
    </source>
</evidence>
<evidence type="ECO:0000305" key="7"/>
<evidence type="ECO:0000305" key="8">
    <source>
    </source>
</evidence>
<evidence type="ECO:0000305" key="9">
    <source>
    </source>
</evidence>
<evidence type="ECO:0007744" key="10">
    <source>
        <dbReference type="PDB" id="5IPO"/>
    </source>
</evidence>
<evidence type="ECO:0007744" key="11">
    <source>
        <dbReference type="PDB" id="5JYH"/>
    </source>
</evidence>
<evidence type="ECO:0007829" key="12">
    <source>
        <dbReference type="PDB" id="5IPO"/>
    </source>
</evidence>
<protein>
    <recommendedName>
        <fullName>Hge-scorpine</fullName>
    </recommendedName>
    <alternativeName>
        <fullName evidence="8 9">Hge-scorpine-like 1</fullName>
        <shortName evidence="5 6">HgeScplp1</shortName>
        <shortName>Hgscplike1</shortName>
    </alternativeName>
    <component>
        <recommendedName>
            <fullName evidence="6">Hge36</fullName>
        </recommendedName>
    </component>
</protein>
<reference key="1">
    <citation type="journal article" date="2007" name="BMC Genomics">
        <title>Transcriptome analysis of the venom gland of the Mexican scorpion Hadrurus gertschi (Arachnida: Scorpiones).</title>
        <authorList>
            <person name="Schwartz E.F."/>
            <person name="Diego-Garcia E."/>
            <person name="Rodriguez de la Vega R.C."/>
            <person name="Possani L.D."/>
        </authorList>
    </citation>
    <scope>NUCLEOTIDE SEQUENCE [LARGE SCALE MRNA]</scope>
    <source>
        <tissue>Venom gland</tissue>
    </source>
</reference>
<reference key="2">
    <citation type="journal article" date="2007" name="Peptides">
        <title>Wide phylogenetic distribution of scorpine and long-chain beta-KTx-like peptides in scorpion venoms: identification of 'orphan' components.</title>
        <authorList>
            <person name="Diego-Garcia E."/>
            <person name="Schwartz E.F."/>
            <person name="D'Suze G."/>
            <person name="Gonzalez S.A."/>
            <person name="Batista C.V."/>
            <person name="Garcia B.I."/>
            <person name="Rodriguez de la Vega R.C."/>
            <person name="Possani L.D."/>
        </authorList>
    </citation>
    <scope>NUCLEOTIDE SEQUENCE [MRNA]</scope>
    <scope>PROTEIN SEQUENCE OF 20-64</scope>
    <scope>MASS SPECTROMETRY</scope>
    <scope>SUBCELLULAR LOCATION</scope>
    <source>
        <tissue>Venom</tissue>
        <tissue>Venom gland</tissue>
    </source>
</reference>
<reference key="3">
    <citation type="journal article" date="2008" name="Cell. Mol. Life Sci.">
        <title>Cytolytic and K+ channel blocking activities of beta-KTx and scorpine-like peptides purified from scorpion venoms.</title>
        <authorList>
            <person name="Diego-Garcia E."/>
            <person name="Abdel-Mottaleb Y."/>
            <person name="Schwartz E.F."/>
            <person name="Rodriguez de la Vega R.C."/>
            <person name="Tytgat J."/>
            <person name="Possani L.D."/>
        </authorList>
    </citation>
    <scope>PROTEIN SEQUENCE OF 20-64</scope>
    <scope>FUNCTION</scope>
    <scope>MASS SPECTROMETRY</scope>
    <scope>SUBCELLULAR LOCATION</scope>
</reference>
<reference evidence="10 11" key="4">
    <citation type="journal article" date="2016" name="FEBS Lett.">
        <title>Solution structure and antiparasitic activity of scorpine-like peptides from Hoffmannihadrurus gertschi.</title>
        <authorList>
            <person name="Flores-Solis D."/>
            <person name="Toledano Y."/>
            <person name="Rodriguez-Lima O."/>
            <person name="Cano-Sanchez P."/>
            <person name="Ramirez-Cordero B.E."/>
            <person name="Landa A."/>
            <person name="Rodriguez de la Vega R.C."/>
            <person name="Del Rio-Portilla F."/>
        </authorList>
    </citation>
    <scope>STRUCTURE BY NMR OF 48-95</scope>
    <scope>FUNCTION</scope>
    <scope>DISULFIDE BONDS</scope>
    <scope>MUTAGENESIS OF 1-MET--MET-51</scope>
</reference>
<dbReference type="EMBL" id="DQ465351">
    <property type="protein sequence ID" value="ABE98267.1"/>
    <property type="molecule type" value="mRNA"/>
</dbReference>
<dbReference type="EMBL" id="EF613116">
    <property type="protein sequence ID" value="ABU94956.1"/>
    <property type="molecule type" value="Genomic_DNA"/>
</dbReference>
<dbReference type="EMBL" id="EL698908">
    <property type="status" value="NOT_ANNOTATED_CDS"/>
    <property type="molecule type" value="mRNA"/>
</dbReference>
<dbReference type="PDB" id="5IPO">
    <property type="method" value="NMR"/>
    <property type="chains" value="A=48-95"/>
</dbReference>
<dbReference type="PDB" id="5JYH">
    <property type="method" value="NMR"/>
    <property type="chains" value="A=52-95"/>
</dbReference>
<dbReference type="PDBsum" id="5IPO"/>
<dbReference type="PDBsum" id="5JYH"/>
<dbReference type="SMR" id="Q0GY40"/>
<dbReference type="GO" id="GO:0005576">
    <property type="term" value="C:extracellular region"/>
    <property type="evidence" value="ECO:0007669"/>
    <property type="project" value="UniProtKB-SubCell"/>
</dbReference>
<dbReference type="GO" id="GO:0015459">
    <property type="term" value="F:potassium channel regulator activity"/>
    <property type="evidence" value="ECO:0007669"/>
    <property type="project" value="UniProtKB-KW"/>
</dbReference>
<dbReference type="GO" id="GO:0090729">
    <property type="term" value="F:toxin activity"/>
    <property type="evidence" value="ECO:0007669"/>
    <property type="project" value="UniProtKB-KW"/>
</dbReference>
<dbReference type="GO" id="GO:0042742">
    <property type="term" value="P:defense response to bacterium"/>
    <property type="evidence" value="ECO:0007669"/>
    <property type="project" value="UniProtKB-KW"/>
</dbReference>
<dbReference type="GO" id="GO:0050832">
    <property type="term" value="P:defense response to fungus"/>
    <property type="evidence" value="ECO:0007669"/>
    <property type="project" value="UniProtKB-KW"/>
</dbReference>
<dbReference type="GO" id="GO:0031640">
    <property type="term" value="P:killing of cells of another organism"/>
    <property type="evidence" value="ECO:0007669"/>
    <property type="project" value="UniProtKB-KW"/>
</dbReference>
<dbReference type="InterPro" id="IPR029237">
    <property type="entry name" value="Long_scorpion_toxin_alpha/beta"/>
</dbReference>
<dbReference type="Pfam" id="PF14866">
    <property type="entry name" value="Scorpion_toxin_alpha-beta"/>
    <property type="match status" value="1"/>
</dbReference>
<dbReference type="PROSITE" id="PS51862">
    <property type="entry name" value="BSPN_CSAB"/>
    <property type="match status" value="1"/>
</dbReference>
<accession>Q0GY40</accession>
<accession>A8SDT6</accession>
<proteinExistence type="evidence at protein level"/>
<organism>
    <name type="scientific">Hoffmannihadrurus gertschi</name>
    <name type="common">Scorpion</name>
    <name type="synonym">Hadrurus gertschi</name>
    <dbReference type="NCBI Taxonomy" id="380989"/>
    <lineage>
        <taxon>Eukaryota</taxon>
        <taxon>Metazoa</taxon>
        <taxon>Ecdysozoa</taxon>
        <taxon>Arthropoda</taxon>
        <taxon>Chelicerata</taxon>
        <taxon>Arachnida</taxon>
        <taxon>Scorpiones</taxon>
        <taxon>Iurida</taxon>
        <taxon>Iuroidea</taxon>
        <taxon>Hadrurus</taxon>
    </lineage>
</organism>
<name>KBX3_HOFGE</name>
<comment type="function">
    <molecule>Hge-scorpine</molecule>
    <text evidence="3">Has antibacterial activity against B.subtilis, but not against S.aureus. Also has hemolytic and cytolytic activities. Since cell lysis occurs at the tested concentrations, observation of activity on potassium channels is impossible.</text>
</comment>
<comment type="function">
    <molecule>Hge36</molecule>
    <text evidence="3 4">Blocks Kv1.1/KCNA1 (IC(50)=185 nM) potassium channels. Shows a weak hemolytic activity.</text>
</comment>
<comment type="subcellular location">
    <subcellularLocation>
        <location evidence="2 3">Secreted</location>
    </subcellularLocation>
</comment>
<comment type="tissue specificity">
    <text evidence="2 3">Expressed by the venom gland.</text>
</comment>
<comment type="mass spectrometry">
    <molecule>Hge-scorpine</molecule>
</comment>
<comment type="mass spectrometry">
    <molecule>Hge-scorpine</molecule>
</comment>
<comment type="mass spectrometry">
    <molecule>Hge36</molecule>
</comment>
<comment type="miscellaneous">
    <molecule>Hge-scorpine</molecule>
    <text>The C-terminus (AA 52-95) blocks Kv1.1/KCNA1, Kv1.2/KCNA2, and Kv1.3/KCNA2 potassium channels, showing a potential important role of AA 48-51.</text>
</comment>
<comment type="miscellaneous">
    <molecule>Hge36</molecule>
    <text evidence="9">Negative results: does not block Kv1.2/KCNA2 and Kv1.3/KCNA3.</text>
</comment>
<comment type="similarity">
    <text evidence="7">Belongs to the long chain scorpion toxin family. Class 3 subfamily.</text>
</comment>
<keyword id="KW-0002">3D-structure</keyword>
<keyword id="KW-0044">Antibiotic</keyword>
<keyword id="KW-0929">Antimicrobial</keyword>
<keyword id="KW-0204">Cytolysis</keyword>
<keyword id="KW-0903">Direct protein sequencing</keyword>
<keyword id="KW-1015">Disulfide bond</keyword>
<keyword id="KW-0295">Fungicide</keyword>
<keyword id="KW-0872">Ion channel impairing toxin</keyword>
<keyword id="KW-0632">Potassium channel impairing toxin</keyword>
<keyword id="KW-0964">Secreted</keyword>
<keyword id="KW-0732">Signal</keyword>
<keyword id="KW-0800">Toxin</keyword>
<keyword id="KW-1220">Voltage-gated potassium channel impairing toxin</keyword>
<feature type="signal peptide" evidence="2 3">
    <location>
        <begin position="1"/>
        <end position="19"/>
    </location>
</feature>
<feature type="chain" id="PRO_0000274682" description="Hge-scorpine" evidence="2 3">
    <location>
        <begin position="20"/>
        <end position="95"/>
    </location>
</feature>
<feature type="chain" id="PRO_0000356887" description="Hge36" evidence="2 3">
    <location>
        <begin position="48"/>
        <end position="95"/>
    </location>
</feature>
<feature type="domain" description="BetaSPN-type CS-alpha/beta" evidence="1">
    <location>
        <begin position="55"/>
        <end position="94"/>
    </location>
</feature>
<feature type="disulfide bond" evidence="4 10 11">
    <location>
        <begin position="58"/>
        <end position="81"/>
    </location>
</feature>
<feature type="disulfide bond" evidence="4 10 11">
    <location>
        <begin position="68"/>
        <end position="86"/>
    </location>
</feature>
<feature type="disulfide bond" evidence="4 10 11">
    <location>
        <begin position="72"/>
        <end position="88"/>
    </location>
</feature>
<feature type="mutagenesis site" description="In HgeD; enhanced potassium channel-blocking and antiparasitic activities." evidence="4">
    <location>
        <begin position="1"/>
        <end position="51"/>
    </location>
</feature>
<feature type="turn" evidence="12">
    <location>
        <begin position="50"/>
        <end position="52"/>
    </location>
</feature>
<feature type="strand" evidence="12">
    <location>
        <begin position="53"/>
        <end position="55"/>
    </location>
</feature>
<feature type="helix" evidence="12">
    <location>
        <begin position="68"/>
        <end position="74"/>
    </location>
</feature>
<feature type="strand" evidence="12">
    <location>
        <begin position="77"/>
        <end position="81"/>
    </location>
</feature>
<feature type="strand" evidence="12">
    <location>
        <begin position="86"/>
        <end position="92"/>
    </location>
</feature>